<feature type="chain" id="PRO_0000452331" description="General alpha-glucoside permease">
    <location>
        <begin position="1"/>
        <end position="616"/>
    </location>
</feature>
<feature type="topological domain" description="Cytoplasmic" evidence="7">
    <location>
        <begin position="1"/>
        <end position="115"/>
    </location>
</feature>
<feature type="transmembrane region" description="Helical" evidence="2">
    <location>
        <begin position="116"/>
        <end position="136"/>
    </location>
</feature>
<feature type="topological domain" description="Extracellular" evidence="7">
    <location>
        <begin position="137"/>
        <end position="160"/>
    </location>
</feature>
<feature type="transmembrane region" description="Helical" evidence="2">
    <location>
        <begin position="161"/>
        <end position="181"/>
    </location>
</feature>
<feature type="topological domain" description="Cytoplasmic" evidence="7">
    <location>
        <begin position="182"/>
        <end position="191"/>
    </location>
</feature>
<feature type="transmembrane region" description="Helical" evidence="2">
    <location>
        <begin position="192"/>
        <end position="212"/>
    </location>
</feature>
<feature type="topological domain" description="Extracellular" evidence="7">
    <location>
        <begin position="213"/>
        <end position="214"/>
    </location>
</feature>
<feature type="transmembrane region" description="Helical" evidence="2">
    <location>
        <begin position="215"/>
        <end position="235"/>
    </location>
</feature>
<feature type="topological domain" description="Cytoplasmic" evidence="7">
    <location>
        <begin position="236"/>
        <end position="242"/>
    </location>
</feature>
<feature type="transmembrane region" description="Helical" evidence="2">
    <location>
        <begin position="243"/>
        <end position="263"/>
    </location>
</feature>
<feature type="topological domain" description="Extracellular" evidence="7">
    <location>
        <begin position="264"/>
        <end position="278"/>
    </location>
</feature>
<feature type="transmembrane region" description="Helical" evidence="2">
    <location>
        <begin position="279"/>
        <end position="299"/>
    </location>
</feature>
<feature type="topological domain" description="Cytoplasmic" evidence="7">
    <location>
        <begin position="300"/>
        <end position="373"/>
    </location>
</feature>
<feature type="transmembrane region" description="Helical" evidence="2">
    <location>
        <begin position="374"/>
        <end position="394"/>
    </location>
</feature>
<feature type="topological domain" description="Extracellular" evidence="7">
    <location>
        <begin position="395"/>
        <end position="404"/>
    </location>
</feature>
<feature type="transmembrane region" description="Helical" evidence="2">
    <location>
        <begin position="405"/>
        <end position="425"/>
    </location>
</feature>
<feature type="topological domain" description="Cytoplasmic" evidence="7">
    <location>
        <begin position="426"/>
        <end position="433"/>
    </location>
</feature>
<feature type="transmembrane region" description="Helical" evidence="2">
    <location>
        <begin position="434"/>
        <end position="454"/>
    </location>
</feature>
<feature type="topological domain" description="Extracellular" evidence="7">
    <location>
        <begin position="455"/>
        <end position="466"/>
    </location>
</feature>
<feature type="transmembrane region" description="Helical" evidence="2">
    <location>
        <begin position="467"/>
        <end position="487"/>
    </location>
</feature>
<feature type="topological domain" description="Cytoplasmic" evidence="7">
    <location>
        <begin position="488"/>
        <end position="504"/>
    </location>
</feature>
<feature type="transmembrane region" description="Helical" evidence="2">
    <location>
        <begin position="505"/>
        <end position="525"/>
    </location>
</feature>
<feature type="topological domain" description="Extracellular" evidence="7">
    <location>
        <begin position="526"/>
        <end position="532"/>
    </location>
</feature>
<feature type="transmembrane region" description="Helical" evidence="2">
    <location>
        <begin position="533"/>
        <end position="553"/>
    </location>
</feature>
<feature type="topological domain" description="Cytoplasmic" evidence="7">
    <location>
        <begin position="554"/>
        <end position="616"/>
    </location>
</feature>
<feature type="region of interest" description="Disordered" evidence="3">
    <location>
        <begin position="15"/>
        <end position="40"/>
    </location>
</feature>
<feature type="region of interest" description="Disordered" evidence="3">
    <location>
        <begin position="587"/>
        <end position="616"/>
    </location>
</feature>
<feature type="compositionally biased region" description="Basic and acidic residues" evidence="3">
    <location>
        <begin position="15"/>
        <end position="27"/>
    </location>
</feature>
<feature type="compositionally biased region" description="Basic and acidic residues" evidence="3">
    <location>
        <begin position="606"/>
        <end position="616"/>
    </location>
</feature>
<keyword id="KW-1003">Cell membrane</keyword>
<keyword id="KW-0472">Membrane</keyword>
<keyword id="KW-0762">Sugar transport</keyword>
<keyword id="KW-0769">Symport</keyword>
<keyword id="KW-0812">Transmembrane</keyword>
<keyword id="KW-1133">Transmembrane helix</keyword>
<keyword id="KW-0813">Transport</keyword>
<protein>
    <recommendedName>
        <fullName evidence="7">General alpha-glucoside permease</fullName>
    </recommendedName>
    <alternativeName>
        <fullName evidence="7">Maltose permease MAL11</fullName>
    </alternativeName>
    <alternativeName>
        <fullName evidence="7">Maltose transport protein MAL11</fullName>
    </alternativeName>
</protein>
<sequence>MKNIISLVSKKKAASKNEDKNISESSRDIVNQQEVFNTEDFEEGKKDSAFELDHLEFTTNSAQLGDSDEDNENVINEMNATDDANEANSEEKSMTLKQALLKYPKAALWSILVSTTLVMEGYDTALLSALYALPVFQRKFGTLNGEGSYEITSQWQIGLNMCVLCGEMIGLQITTYMVEFMGNRYTMITALGLLTAYIFILYYCKSLAMIAVGQILSAIPWGCFQSLAVTYASEVCPLALRYYMTSYSNICWLFGQIFASGIMKNSQENLGNSDLGYKLPFALQWIWPAPLMIGIFFAPESPWWLVRKDRVAEARKSLSRILSGKGAEKDIQVDLTLKQIELTIEKERLLASKSGSFFNCFKGVNGRRTRLACLTWVAQNSSGAVLLGYSTYFFERAGMATDKAFTFSLIQYCLGLAGTLCSWVISGRVGRWTILTYGLAFQMVCLFIIGGMGFGSGSSASNGAGGLLLALSFFYNAGIGAVVYCIVAEIPSAELRTKTIVLARICYNLMAVINAILTPYMLNVSDWNWGAKTGLYWGGFTAVTLAWVIIDLPETTGRTFSEINELFNQGVPARKFASTVVDPFGKGKTQHDSLADESISQSSSIKQRELNAADKC</sequence>
<organism evidence="11">
    <name type="scientific">Saccharomyces cerevisiae (strain CEN.PK113-7D)</name>
    <name type="common">Baker's yeast</name>
    <dbReference type="NCBI Taxonomy" id="889517"/>
    <lineage>
        <taxon>Eukaryota</taxon>
        <taxon>Fungi</taxon>
        <taxon>Dikarya</taxon>
        <taxon>Ascomycota</taxon>
        <taxon>Saccharomycotina</taxon>
        <taxon>Saccharomycetes</taxon>
        <taxon>Saccharomycetales</taxon>
        <taxon>Saccharomycetaceae</taxon>
        <taxon>Saccharomyces</taxon>
    </lineage>
</organism>
<comment type="function">
    <text evidence="1 4 5">High-affinity uptake of alpha-glucosides such as maltose, turanose, isomaltose, alpha-methylglucoside, maltotriose, palatinose, trehalose, melezitose and glucose (PubMed:10368160, PubMed:15128531). Acts with the concomitant transport of protons into the cell (symport system) (By similarity). Provides an alternative and minor mechanism for growth on trehalose carbon source by transporting trehalose into the cytoplasm for conversion to glucose by neutral trehalase NTH1 (PubMed:10368160, PubMed:15128531).</text>
</comment>
<comment type="subcellular location">
    <subcellularLocation>
        <location evidence="8 9">Cell membrane</location>
        <topology evidence="2">Multi-pass membrane protein</topology>
    </subcellularLocation>
</comment>
<comment type="disruption phenotype">
    <text evidence="4 5">Severely decreases intracellular trehalose during growth on trehalose carbon source (PubMed:10368160). Decreases growth on trehalose carbon source, simultaneous disruption of ATH1 abolishes growth on trehalose carbon source (PubMed:15128531).</text>
</comment>
<comment type="similarity">
    <text evidence="7">Belongs to the major facilitator superfamily. Sugar transporter (TC 2.A.1.1) family.</text>
</comment>
<comment type="caution">
    <text evidence="9">The alternative and minor mechanism for utilizing trehalose as a carbon source provided by the MAL11/AGT1 and NTH1 system is specific to S.cerevisiae strains with constitutive and non-glucose-repressible expression of the MAL genes.</text>
</comment>
<proteinExistence type="inferred from homology"/>
<gene>
    <name evidence="1" type="primary">MAL11</name>
    <name evidence="6" type="synonym">AGT1</name>
    <name evidence="10" type="ORF">CENPK1137D_3313</name>
</gene>
<reference evidence="11" key="1">
    <citation type="journal article" date="2012" name="Microb. Cell Fact.">
        <title>De novo sequencing, assembly and analysis of the genome of the laboratory strain Saccharomyces cerevisiae CEN.PK113-7D, a model for modern industrial biotechnology.</title>
        <authorList>
            <person name="Nijkamp J.F."/>
            <person name="van den Broek M."/>
            <person name="Datema E."/>
            <person name="de Kok S."/>
            <person name="Bosman L."/>
            <person name="Luttik M.A."/>
            <person name="Daran-Lapujade P."/>
            <person name="Vongsangnak W."/>
            <person name="Nielsen J."/>
            <person name="Heijne W.H.M."/>
            <person name="Klaassen P."/>
            <person name="Paddon C.J."/>
            <person name="Platt D."/>
            <person name="Koetter P."/>
            <person name="van Ham R.C."/>
            <person name="Reinders M.J.T."/>
            <person name="Pronk J.T."/>
            <person name="de Ridder D."/>
            <person name="Daran J.-M."/>
        </authorList>
    </citation>
    <scope>NUCLEOTIDE SEQUENCE [LARGE SCALE GENOMIC DNA]</scope>
    <source>
        <strain evidence="11">CEN.PK113-7D</strain>
    </source>
</reference>
<reference key="2">
    <citation type="journal article" date="1999" name="J. Bacteriol.">
        <title>AGT1, encoding an alpha-glucoside transporter involved in uptake and intracellular accumulation of trehalose in Saccharomyces cerevisiae.</title>
        <authorList>
            <person name="Plourde-Owobi L."/>
            <person name="Durner S."/>
            <person name="Parrou J.L."/>
            <person name="Wieczorke R."/>
            <person name="Goma G."/>
            <person name="Francois J."/>
        </authorList>
    </citation>
    <scope>FUNCTION</scope>
    <scope>DISRUPTION PHENOTYPE</scope>
</reference>
<reference key="3">
    <citation type="journal article" date="2004" name="Appl. Environ. Microbiol.">
        <title>Two distinct pathways for trehalose assimilation in the yeast Saccharomyces cerevisiae.</title>
        <authorList>
            <person name="Jules M."/>
            <person name="Guillou V."/>
            <person name="Francois J."/>
            <person name="Parrou J.L."/>
        </authorList>
    </citation>
    <scope>FUNCTION</scope>
    <scope>SUBCELLULAR LOCATION</scope>
    <scope>DISRUPTION PHENOTYPE</scope>
</reference>
<evidence type="ECO:0000250" key="1">
    <source>
        <dbReference type="UniProtKB" id="P53048"/>
    </source>
</evidence>
<evidence type="ECO:0000255" key="2"/>
<evidence type="ECO:0000256" key="3">
    <source>
        <dbReference type="SAM" id="MobiDB-lite"/>
    </source>
</evidence>
<evidence type="ECO:0000269" key="4">
    <source>
    </source>
</evidence>
<evidence type="ECO:0000269" key="5">
    <source>
    </source>
</evidence>
<evidence type="ECO:0000303" key="6">
    <source>
    </source>
</evidence>
<evidence type="ECO:0000305" key="7"/>
<evidence type="ECO:0000305" key="8">
    <source>
    </source>
</evidence>
<evidence type="ECO:0000305" key="9">
    <source>
    </source>
</evidence>
<evidence type="ECO:0000312" key="10">
    <source>
        <dbReference type="EMBL" id="EIW10695.1"/>
    </source>
</evidence>
<evidence type="ECO:0000312" key="11">
    <source>
        <dbReference type="Proteomes" id="UP000013192"/>
    </source>
</evidence>
<accession>N1PA11</accession>
<dbReference type="EMBL" id="CM001528">
    <property type="protein sequence ID" value="EIW10695.1"/>
    <property type="molecule type" value="Genomic_DNA"/>
</dbReference>
<dbReference type="SMR" id="N1PA11"/>
<dbReference type="HOGENOM" id="CLU_001265_11_5_1"/>
<dbReference type="OrthoDB" id="21105at4893"/>
<dbReference type="Proteomes" id="UP000013192">
    <property type="component" value="Chromosome VII"/>
</dbReference>
<dbReference type="GO" id="GO:0005886">
    <property type="term" value="C:plasma membrane"/>
    <property type="evidence" value="ECO:0007669"/>
    <property type="project" value="UniProtKB-SubCell"/>
</dbReference>
<dbReference type="GO" id="GO:0005352">
    <property type="term" value="F:alpha-glucoside:proton symporter activity"/>
    <property type="evidence" value="ECO:0000315"/>
    <property type="project" value="UniProtKB"/>
</dbReference>
<dbReference type="GO" id="GO:0005351">
    <property type="term" value="F:carbohydrate:proton symporter activity"/>
    <property type="evidence" value="ECO:0007669"/>
    <property type="project" value="TreeGrafter"/>
</dbReference>
<dbReference type="GO" id="GO:0015976">
    <property type="term" value="P:carbon utilization"/>
    <property type="evidence" value="ECO:0000316"/>
    <property type="project" value="UniProtKB"/>
</dbReference>
<dbReference type="FunFam" id="1.20.1250.20:FF:000254">
    <property type="entry name" value="MAL31p Maltose permease"/>
    <property type="match status" value="1"/>
</dbReference>
<dbReference type="Gene3D" id="1.20.1250.20">
    <property type="entry name" value="MFS general substrate transporter like domains"/>
    <property type="match status" value="1"/>
</dbReference>
<dbReference type="InterPro" id="IPR020846">
    <property type="entry name" value="MFS_dom"/>
</dbReference>
<dbReference type="InterPro" id="IPR005828">
    <property type="entry name" value="MFS_sugar_transport-like"/>
</dbReference>
<dbReference type="InterPro" id="IPR050360">
    <property type="entry name" value="MFS_Sugar_Transporters"/>
</dbReference>
<dbReference type="InterPro" id="IPR036259">
    <property type="entry name" value="MFS_trans_sf"/>
</dbReference>
<dbReference type="InterPro" id="IPR003663">
    <property type="entry name" value="Sugar/inositol_transpt"/>
</dbReference>
<dbReference type="NCBIfam" id="TIGR00879">
    <property type="entry name" value="SP"/>
    <property type="match status" value="1"/>
</dbReference>
<dbReference type="PANTHER" id="PTHR48022:SF5">
    <property type="entry name" value="ALPHA-GLUCOSIDES PERMEASE MPH2-RELATED"/>
    <property type="match status" value="1"/>
</dbReference>
<dbReference type="PANTHER" id="PTHR48022">
    <property type="entry name" value="PLASTIDIC GLUCOSE TRANSPORTER 4"/>
    <property type="match status" value="1"/>
</dbReference>
<dbReference type="Pfam" id="PF00083">
    <property type="entry name" value="Sugar_tr"/>
    <property type="match status" value="1"/>
</dbReference>
<dbReference type="SUPFAM" id="SSF103473">
    <property type="entry name" value="MFS general substrate transporter"/>
    <property type="match status" value="1"/>
</dbReference>
<dbReference type="PROSITE" id="PS50850">
    <property type="entry name" value="MFS"/>
    <property type="match status" value="1"/>
</dbReference>
<name>MAL11_YEASC</name>